<keyword id="KW-0007">Acetylation</keyword>
<keyword id="KW-1017">Isopeptide bond</keyword>
<keyword id="KW-0597">Phosphoprotein</keyword>
<keyword id="KW-1185">Reference proteome</keyword>
<keyword id="KW-0832">Ubl conjugation</keyword>
<evidence type="ECO:0000250" key="1">
    <source>
        <dbReference type="UniProtKB" id="Q6ZU65"/>
    </source>
</evidence>
<evidence type="ECO:0000250" key="2">
    <source>
        <dbReference type="UniProtKB" id="Q80WC1"/>
    </source>
</evidence>
<evidence type="ECO:0000256" key="3">
    <source>
        <dbReference type="SAM" id="MobiDB-lite"/>
    </source>
</evidence>
<evidence type="ECO:0000305" key="4"/>
<evidence type="ECO:0007744" key="5">
    <source>
    </source>
</evidence>
<dbReference type="EMBL" id="CH473959">
    <property type="protein sequence ID" value="EDM15360.1"/>
    <property type="molecule type" value="Genomic_DNA"/>
</dbReference>
<dbReference type="RefSeq" id="NP_001128025.1">
    <property type="nucleotide sequence ID" value="NM_001134553.1"/>
</dbReference>
<dbReference type="SMR" id="D4A666"/>
<dbReference type="FunCoup" id="D4A666">
    <property type="interactions" value="2594"/>
</dbReference>
<dbReference type="STRING" id="10116.ENSRNOP00000061860"/>
<dbReference type="GlyGen" id="D4A666">
    <property type="glycosylation" value="1 site"/>
</dbReference>
<dbReference type="iPTMnet" id="D4A666"/>
<dbReference type="PhosphoSitePlus" id="D4A666"/>
<dbReference type="PaxDb" id="10116-ENSRNOP00000061860"/>
<dbReference type="PeptideAtlas" id="D4A666"/>
<dbReference type="GeneID" id="312248"/>
<dbReference type="KEGG" id="rno:312248"/>
<dbReference type="UCSC" id="RGD:1310722">
    <property type="organism name" value="rat"/>
</dbReference>
<dbReference type="AGR" id="RGD:1310722"/>
<dbReference type="CTD" id="254048"/>
<dbReference type="RGD" id="1310722">
    <property type="gene designation" value="Ubn2"/>
</dbReference>
<dbReference type="VEuPathDB" id="HostDB:ENSRNOG00000005564"/>
<dbReference type="eggNOG" id="KOG4786">
    <property type="taxonomic scope" value="Eukaryota"/>
</dbReference>
<dbReference type="HOGENOM" id="CLU_007400_1_0_1"/>
<dbReference type="InParanoid" id="D4A666"/>
<dbReference type="OrthoDB" id="68076at2759"/>
<dbReference type="PhylomeDB" id="D4A666"/>
<dbReference type="TreeFam" id="TF326088"/>
<dbReference type="PRO" id="PR:D4A666"/>
<dbReference type="Proteomes" id="UP000002494">
    <property type="component" value="Chromosome 4"/>
</dbReference>
<dbReference type="Proteomes" id="UP000234681">
    <property type="component" value="Chromosome 4"/>
</dbReference>
<dbReference type="Bgee" id="ENSRNOG00000005564">
    <property type="expression patterns" value="Expressed in testis and 19 other cell types or tissues"/>
</dbReference>
<dbReference type="GO" id="GO:0005634">
    <property type="term" value="C:nucleus"/>
    <property type="evidence" value="ECO:0000318"/>
    <property type="project" value="GO_Central"/>
</dbReference>
<dbReference type="GO" id="GO:0006325">
    <property type="term" value="P:chromatin organization"/>
    <property type="evidence" value="ECO:0000318"/>
    <property type="project" value="GO_Central"/>
</dbReference>
<dbReference type="InterPro" id="IPR014840">
    <property type="entry name" value="HRD"/>
</dbReference>
<dbReference type="InterPro" id="IPR026947">
    <property type="entry name" value="UBN_middle_dom"/>
</dbReference>
<dbReference type="PANTHER" id="PTHR21669">
    <property type="entry name" value="CAPZ-INTERACTING PROTEIN AND RELATED PROTEINS"/>
    <property type="match status" value="1"/>
</dbReference>
<dbReference type="PANTHER" id="PTHR21669:SF10">
    <property type="entry name" value="UBINUCLEIN-2"/>
    <property type="match status" value="1"/>
</dbReference>
<dbReference type="Pfam" id="PF08729">
    <property type="entry name" value="HUN"/>
    <property type="match status" value="1"/>
</dbReference>
<dbReference type="Pfam" id="PF14075">
    <property type="entry name" value="UBN_AB"/>
    <property type="match status" value="1"/>
</dbReference>
<name>UBN2_RAT</name>
<feature type="chain" id="PRO_0000403362" description="Ubinuclein-2">
    <location>
        <begin position="1"/>
        <end position="1330"/>
    </location>
</feature>
<feature type="region of interest" description="Disordered" evidence="3">
    <location>
        <begin position="1"/>
        <end position="113"/>
    </location>
</feature>
<feature type="region of interest" description="Disordered" evidence="3">
    <location>
        <begin position="236"/>
        <end position="304"/>
    </location>
</feature>
<feature type="region of interest" description="Disordered" evidence="3">
    <location>
        <begin position="322"/>
        <end position="345"/>
    </location>
</feature>
<feature type="region of interest" description="Disordered" evidence="3">
    <location>
        <begin position="559"/>
        <end position="583"/>
    </location>
</feature>
<feature type="region of interest" description="Disordered" evidence="3">
    <location>
        <begin position="767"/>
        <end position="789"/>
    </location>
</feature>
<feature type="region of interest" description="Disordered" evidence="3">
    <location>
        <begin position="801"/>
        <end position="835"/>
    </location>
</feature>
<feature type="region of interest" description="Disordered" evidence="3">
    <location>
        <begin position="866"/>
        <end position="909"/>
    </location>
</feature>
<feature type="region of interest" description="Disordered" evidence="3">
    <location>
        <begin position="964"/>
        <end position="991"/>
    </location>
</feature>
<feature type="region of interest" description="Disordered" evidence="3">
    <location>
        <begin position="1021"/>
        <end position="1202"/>
    </location>
</feature>
<feature type="region of interest" description="Disordered" evidence="3">
    <location>
        <begin position="1292"/>
        <end position="1330"/>
    </location>
</feature>
<feature type="compositionally biased region" description="Basic and acidic residues" evidence="3">
    <location>
        <begin position="16"/>
        <end position="31"/>
    </location>
</feature>
<feature type="compositionally biased region" description="Basic and acidic residues" evidence="3">
    <location>
        <begin position="55"/>
        <end position="67"/>
    </location>
</feature>
<feature type="compositionally biased region" description="Pro residues" evidence="3">
    <location>
        <begin position="81"/>
        <end position="96"/>
    </location>
</feature>
<feature type="compositionally biased region" description="Basic and acidic residues" evidence="3">
    <location>
        <begin position="560"/>
        <end position="570"/>
    </location>
</feature>
<feature type="compositionally biased region" description="Polar residues" evidence="3">
    <location>
        <begin position="767"/>
        <end position="780"/>
    </location>
</feature>
<feature type="compositionally biased region" description="Polar residues" evidence="3">
    <location>
        <begin position="809"/>
        <end position="818"/>
    </location>
</feature>
<feature type="compositionally biased region" description="Low complexity" evidence="3">
    <location>
        <begin position="866"/>
        <end position="895"/>
    </location>
</feature>
<feature type="compositionally biased region" description="Polar residues" evidence="3">
    <location>
        <begin position="899"/>
        <end position="909"/>
    </location>
</feature>
<feature type="compositionally biased region" description="Polar residues" evidence="3">
    <location>
        <begin position="969"/>
        <end position="980"/>
    </location>
</feature>
<feature type="compositionally biased region" description="Pro residues" evidence="3">
    <location>
        <begin position="1030"/>
        <end position="1044"/>
    </location>
</feature>
<feature type="compositionally biased region" description="Low complexity" evidence="3">
    <location>
        <begin position="1045"/>
        <end position="1056"/>
    </location>
</feature>
<feature type="compositionally biased region" description="Polar residues" evidence="3">
    <location>
        <begin position="1073"/>
        <end position="1148"/>
    </location>
</feature>
<feature type="compositionally biased region" description="Polar residues" evidence="3">
    <location>
        <begin position="1158"/>
        <end position="1169"/>
    </location>
</feature>
<feature type="compositionally biased region" description="Polar residues" evidence="3">
    <location>
        <begin position="1308"/>
        <end position="1317"/>
    </location>
</feature>
<feature type="compositionally biased region" description="Basic and acidic residues" evidence="3">
    <location>
        <begin position="1321"/>
        <end position="1330"/>
    </location>
</feature>
<feature type="modified residue" description="Phosphoserine" evidence="5">
    <location>
        <position position="13"/>
    </location>
</feature>
<feature type="modified residue" description="Phosphothreonine" evidence="1">
    <location>
        <position position="229"/>
    </location>
</feature>
<feature type="modified residue" description="Phosphoserine" evidence="5">
    <location>
        <position position="236"/>
    </location>
</feature>
<feature type="modified residue" description="Phosphothreonine" evidence="5">
    <location>
        <position position="238"/>
    </location>
</feature>
<feature type="modified residue" description="Phosphoserine" evidence="1">
    <location>
        <position position="297"/>
    </location>
</feature>
<feature type="modified residue" description="Phosphoserine" evidence="2">
    <location>
        <position position="402"/>
    </location>
</feature>
<feature type="modified residue" description="Phosphoserine" evidence="2">
    <location>
        <position position="405"/>
    </location>
</feature>
<feature type="modified residue" description="Phosphoserine" evidence="2">
    <location>
        <position position="408"/>
    </location>
</feature>
<feature type="modified residue" description="Phosphoserine" evidence="1">
    <location>
        <position position="570"/>
    </location>
</feature>
<feature type="modified residue" description="N6-acetyllysine" evidence="2">
    <location>
        <position position="1052"/>
    </location>
</feature>
<feature type="modified residue" description="Phosphoserine" evidence="1">
    <location>
        <position position="1107"/>
    </location>
</feature>
<feature type="modified residue" description="N6-acetyllysine" evidence="1">
    <location>
        <position position="1132"/>
    </location>
</feature>
<feature type="cross-link" description="Glycyl lysine isopeptide (Lys-Gly) (interchain with G-Cter in SUMO2)" evidence="1">
    <location>
        <position position="258"/>
    </location>
</feature>
<accession>D4A666</accession>
<gene>
    <name type="primary">Ubn2</name>
</gene>
<comment type="similarity">
    <text evidence="4">Belongs to the ubinuclein family.</text>
</comment>
<organism>
    <name type="scientific">Rattus norvegicus</name>
    <name type="common">Rat</name>
    <dbReference type="NCBI Taxonomy" id="10116"/>
    <lineage>
        <taxon>Eukaryota</taxon>
        <taxon>Metazoa</taxon>
        <taxon>Chordata</taxon>
        <taxon>Craniata</taxon>
        <taxon>Vertebrata</taxon>
        <taxon>Euteleostomi</taxon>
        <taxon>Mammalia</taxon>
        <taxon>Eutheria</taxon>
        <taxon>Euarchontoglires</taxon>
        <taxon>Glires</taxon>
        <taxon>Rodentia</taxon>
        <taxon>Myomorpha</taxon>
        <taxon>Muroidea</taxon>
        <taxon>Muridae</taxon>
        <taxon>Murinae</taxon>
        <taxon>Rattus</taxon>
    </lineage>
</organism>
<reference key="1">
    <citation type="submission" date="2005-07" db="EMBL/GenBank/DDBJ databases">
        <authorList>
            <person name="Mural R.J."/>
            <person name="Adams M.D."/>
            <person name="Myers E.W."/>
            <person name="Smith H.O."/>
            <person name="Venter J.C."/>
        </authorList>
    </citation>
    <scope>NUCLEOTIDE SEQUENCE [LARGE SCALE GENOMIC DNA]</scope>
</reference>
<reference key="2">
    <citation type="journal article" date="2012" name="Nat. Commun.">
        <title>Quantitative maps of protein phosphorylation sites across 14 different rat organs and tissues.</title>
        <authorList>
            <person name="Lundby A."/>
            <person name="Secher A."/>
            <person name="Lage K."/>
            <person name="Nordsborg N.B."/>
            <person name="Dmytriyev A."/>
            <person name="Lundby C."/>
            <person name="Olsen J.V."/>
        </authorList>
    </citation>
    <scope>PHOSPHORYLATION [LARGE SCALE ANALYSIS] AT SER-13; SER-236 AND THR-238</scope>
    <scope>IDENTIFICATION BY MASS SPECTROMETRY [LARGE SCALE ANALYSIS]</scope>
</reference>
<sequence length="1330" mass="143640">MAEPRRVAFISLSPVRRREADFAGAEREPPRLEPQPYREPARAEPAPRADAQPPARDKPLPQREVSRAEPPMALQREPPRPEPPPPPLPLQTPPPRESASRAEPPPRPPKETVRLELVLKDPTDESCVEFSYPELLLCGEQRKKLVHTEDPFTDEHKERQEVEMLAKKFEMKYGGKARKHRKDRLQDLIDIGFGYDETDPFIDNSEAYDELVPASLTTKYGGFYINTGTLQFRQASDTEEDDFTDNQKHKPPKVPKIKDDDIEAKKRKRKEEGEKEKKPRKKVPKQLGVVALNSHKSEKKKKRYKDSLSLAAMIRKFQKEKDALKKESTPKVPVIPSTSSLPKPPCAATTLGDDIPDLSLNSADPDLPIFVSTNEHELFQEAENALEMLDDFDFDRLLDATSDGSPLSESGGENGNTTQPTFASQVVPKVVPTLPDGLPVLLEKRIEDLRVAAKLFDEEGRKKFFTQDMNNILLDIELQLQELGPVIRSGVYSHLEAFVPCNKETLVKRLKKLHLNVQDDRLREPLQKLKLAVSNVMPEQLFKYQEDCQARSQAKCAKLQADEEREKNGSDDDDDEKPGKRVIGPRKKFHWDDTIRTLLCNLVEIKLGCYELEPNKSQSAEDYLKSFMETEVKPLWPKGWMQARMLFKESRSVHNHLTSAPAKKKVIPASKPKVKEVMVKTLPVRSFPTMLKECSPKKDPKAPASVVASGGCPCTSSSTSIVASASSSSTPAQETICLDDSLDEDLSLPSASLDLVSEALAVINNGNKGPSVSSRLNVPTTKPRPGLREEKLASIMSKLPLATPKKLDSPQTAHSSSLIAGHTGPVPKKPQDLAHTGISSGLIAGSSIQNPKVSLEPLPARLLQQGLQRSSQIHASSSQTHVSSSQAQAAASSHALGTSEAQDASSLTQVTKVHQHSAVQQNYVSPLQATISKSQTNPVVKLSNNPQLSCSSQLLKTSEKPLMYRLPLSTPSPGNGSQGSHPLVSRTAPSTTTSSNYLAKAMVSQISTQGFKSPFSMAASPKLAASPKPATSPKPLTSPKPSVSPKPSLSAKPSVSTKLISKSNPTPKPAVCPSSSSPNTLVAQSSHSTSNNPAHKQPSGMNISRQSPTLNLLPSNRTSGLPTTKTLQAPSKLTNSSSAGTVGKNSLSGIPVNVPASRGSNLNSSGANRTSLSGGTGSGTQGATKPLSTPHRPTSASGSSVVTASVQSTAGASLLANASPLTLMTSPLSVTNQTVTPFGMLGGLVPVTMPFQFPLELLGFGTDTAGVTATSGSTSAALHHGLTQNLLKSLQPGTQHAATLPHSPLPTHLQQAFNDGGQSKGDTKLPRKPQ</sequence>
<protein>
    <recommendedName>
        <fullName>Ubinuclein-2</fullName>
    </recommendedName>
</protein>
<proteinExistence type="evidence at protein level"/>